<dbReference type="EC" id="2.7.-.-" evidence="1"/>
<dbReference type="EMBL" id="CP001138">
    <property type="protein sequence ID" value="ACH52412.1"/>
    <property type="molecule type" value="Genomic_DNA"/>
</dbReference>
<dbReference type="RefSeq" id="WP_000187559.1">
    <property type="nucleotide sequence ID" value="NC_011149.1"/>
</dbReference>
<dbReference type="SMR" id="B5EZV0"/>
<dbReference type="KEGG" id="sea:SeAg_B4203"/>
<dbReference type="HOGENOM" id="CLU_006533_0_0_6"/>
<dbReference type="UniPathway" id="UPA00232"/>
<dbReference type="Proteomes" id="UP000008819">
    <property type="component" value="Chromosome"/>
</dbReference>
<dbReference type="GO" id="GO:0005886">
    <property type="term" value="C:plasma membrane"/>
    <property type="evidence" value="ECO:0007669"/>
    <property type="project" value="UniProtKB-SubCell"/>
</dbReference>
<dbReference type="GO" id="GO:0005524">
    <property type="term" value="F:ATP binding"/>
    <property type="evidence" value="ECO:0007669"/>
    <property type="project" value="UniProtKB-KW"/>
</dbReference>
<dbReference type="GO" id="GO:0004672">
    <property type="term" value="F:protein kinase activity"/>
    <property type="evidence" value="ECO:0007669"/>
    <property type="project" value="UniProtKB-UniRule"/>
</dbReference>
<dbReference type="GO" id="GO:0010795">
    <property type="term" value="P:regulation of ubiquinone biosynthetic process"/>
    <property type="evidence" value="ECO:0007669"/>
    <property type="project" value="UniProtKB-UniRule"/>
</dbReference>
<dbReference type="GO" id="GO:0006744">
    <property type="term" value="P:ubiquinone biosynthetic process"/>
    <property type="evidence" value="ECO:0007669"/>
    <property type="project" value="UniProtKB-UniPathway"/>
</dbReference>
<dbReference type="CDD" id="cd13972">
    <property type="entry name" value="UbiB"/>
    <property type="match status" value="1"/>
</dbReference>
<dbReference type="HAMAP" id="MF_00414">
    <property type="entry name" value="UbiB"/>
    <property type="match status" value="1"/>
</dbReference>
<dbReference type="InterPro" id="IPR004147">
    <property type="entry name" value="ABC1_dom"/>
</dbReference>
<dbReference type="InterPro" id="IPR011009">
    <property type="entry name" value="Kinase-like_dom_sf"/>
</dbReference>
<dbReference type="InterPro" id="IPR010232">
    <property type="entry name" value="UbiB"/>
</dbReference>
<dbReference type="InterPro" id="IPR045308">
    <property type="entry name" value="UbiB_bact"/>
</dbReference>
<dbReference type="InterPro" id="IPR050154">
    <property type="entry name" value="UbiB_kinase"/>
</dbReference>
<dbReference type="NCBIfam" id="NF003404">
    <property type="entry name" value="PRK04750.1"/>
    <property type="match status" value="1"/>
</dbReference>
<dbReference type="NCBIfam" id="TIGR01982">
    <property type="entry name" value="UbiB"/>
    <property type="match status" value="1"/>
</dbReference>
<dbReference type="PANTHER" id="PTHR10566">
    <property type="entry name" value="CHAPERONE-ACTIVITY OF BC1 COMPLEX CABC1 -RELATED"/>
    <property type="match status" value="1"/>
</dbReference>
<dbReference type="PANTHER" id="PTHR10566:SF113">
    <property type="entry name" value="PROTEIN ACTIVITY OF BC1 COMPLEX KINASE 7, CHLOROPLASTIC"/>
    <property type="match status" value="1"/>
</dbReference>
<dbReference type="Pfam" id="PF03109">
    <property type="entry name" value="ABC1"/>
    <property type="match status" value="1"/>
</dbReference>
<dbReference type="SUPFAM" id="SSF56112">
    <property type="entry name" value="Protein kinase-like (PK-like)"/>
    <property type="match status" value="1"/>
</dbReference>
<proteinExistence type="inferred from homology"/>
<gene>
    <name evidence="1" type="primary">ubiB</name>
    <name type="ordered locus">SeAg_B4203</name>
</gene>
<keyword id="KW-0067">ATP-binding</keyword>
<keyword id="KW-0997">Cell inner membrane</keyword>
<keyword id="KW-1003">Cell membrane</keyword>
<keyword id="KW-0418">Kinase</keyword>
<keyword id="KW-0472">Membrane</keyword>
<keyword id="KW-0547">Nucleotide-binding</keyword>
<keyword id="KW-0808">Transferase</keyword>
<keyword id="KW-0812">Transmembrane</keyword>
<keyword id="KW-1133">Transmembrane helix</keyword>
<keyword id="KW-0831">Ubiquinone biosynthesis</keyword>
<organism>
    <name type="scientific">Salmonella agona (strain SL483)</name>
    <dbReference type="NCBI Taxonomy" id="454166"/>
    <lineage>
        <taxon>Bacteria</taxon>
        <taxon>Pseudomonadati</taxon>
        <taxon>Pseudomonadota</taxon>
        <taxon>Gammaproteobacteria</taxon>
        <taxon>Enterobacterales</taxon>
        <taxon>Enterobacteriaceae</taxon>
        <taxon>Salmonella</taxon>
    </lineage>
</organism>
<reference key="1">
    <citation type="journal article" date="2011" name="J. Bacteriol.">
        <title>Comparative genomics of 28 Salmonella enterica isolates: evidence for CRISPR-mediated adaptive sublineage evolution.</title>
        <authorList>
            <person name="Fricke W.F."/>
            <person name="Mammel M.K."/>
            <person name="McDermott P.F."/>
            <person name="Tartera C."/>
            <person name="White D.G."/>
            <person name="Leclerc J.E."/>
            <person name="Ravel J."/>
            <person name="Cebula T.A."/>
        </authorList>
    </citation>
    <scope>NUCLEOTIDE SEQUENCE [LARGE SCALE GENOMIC DNA]</scope>
    <source>
        <strain>SL483</strain>
    </source>
</reference>
<evidence type="ECO:0000255" key="1">
    <source>
        <dbReference type="HAMAP-Rule" id="MF_00414"/>
    </source>
</evidence>
<protein>
    <recommendedName>
        <fullName evidence="1">Probable protein kinase UbiB</fullName>
        <ecNumber evidence="1">2.7.-.-</ecNumber>
    </recommendedName>
    <alternativeName>
        <fullName evidence="1">Ubiquinone biosynthesis protein UbiB</fullName>
    </alternativeName>
</protein>
<name>UBIB_SALA4</name>
<accession>B5EZV0</accession>
<feature type="chain" id="PRO_1000123916" description="Probable protein kinase UbiB">
    <location>
        <begin position="1"/>
        <end position="546"/>
    </location>
</feature>
<feature type="transmembrane region" description="Helical" evidence="1">
    <location>
        <begin position="501"/>
        <end position="521"/>
    </location>
</feature>
<feature type="transmembrane region" description="Helical" evidence="1">
    <location>
        <begin position="522"/>
        <end position="542"/>
    </location>
</feature>
<feature type="domain" description="Protein kinase" evidence="1">
    <location>
        <begin position="124"/>
        <end position="502"/>
    </location>
</feature>
<feature type="active site" description="Proton acceptor" evidence="1">
    <location>
        <position position="288"/>
    </location>
</feature>
<feature type="binding site" evidence="1">
    <location>
        <begin position="130"/>
        <end position="138"/>
    </location>
    <ligand>
        <name>ATP</name>
        <dbReference type="ChEBI" id="CHEBI:30616"/>
    </ligand>
</feature>
<feature type="binding site" evidence="1">
    <location>
        <position position="153"/>
    </location>
    <ligand>
        <name>ATP</name>
        <dbReference type="ChEBI" id="CHEBI:30616"/>
    </ligand>
</feature>
<sequence length="546" mass="63239">MTPGEVRRLYFIIRTFLSYGLDELIPRMRLTLPLRLWRYSLFWMPNRHKDKLLGERLRLALQELGPVWIKFGQMLSTRRDLFPPQIADQLALLQDKVAPFDGRLAKAQIEEAMGGLPVEAWFDDFDIQPLASASIAQVHTARLKSNGKEVVIKVIRPDILPVIQADLKLIYRLARWVPRLLPDGRRLRPTEVVREYEKTLIDELNLLRESANAIQLRRNFENSPMLYIPEVYSDYCSQNMMVMERIYGIPVSDVAALEKNGTNMKLLAERGVKVFFTQVFRDSFFHADMHPGNIFVSHEHPENPQYIGIDCGIVGSLNKEDKRYLAENFIAFFNRDYRKVAELHVDSGWVPPDTNVEDFEFAIRTVCEPIFEKPLAEISFGHVLLNLFNTARRFNMEVQPQLVLLQKTLLYVEGVGRQLYPQLDLWKTAKPFLESWIKDQVGIPALTRALKEKAPFWVEKMPEIPELVYDSLRQGKYLQHSVDKIARELQVNHVRQSQSRYLLGIGATLLLSGSFLLVNRPEWGLMPGWLMVGGVVVWLVGWRKTR</sequence>
<comment type="function">
    <text evidence="1">Is probably a protein kinase regulator of UbiI activity which is involved in aerobic coenzyme Q (ubiquinone) biosynthesis.</text>
</comment>
<comment type="pathway">
    <text>Cofactor biosynthesis; ubiquinone biosynthesis [regulation].</text>
</comment>
<comment type="subcellular location">
    <subcellularLocation>
        <location evidence="1">Cell inner membrane</location>
        <topology evidence="1">Multi-pass membrane protein</topology>
    </subcellularLocation>
</comment>
<comment type="similarity">
    <text evidence="1">Belongs to the ABC1 family. UbiB subfamily.</text>
</comment>